<dbReference type="EMBL" id="L42023">
    <property type="protein sequence ID" value="AAC23157.1"/>
    <property type="molecule type" value="Genomic_DNA"/>
</dbReference>
<dbReference type="PIR" id="H64033">
    <property type="entry name" value="H64033"/>
</dbReference>
<dbReference type="RefSeq" id="NP_439660.1">
    <property type="nucleotide sequence ID" value="NC_000907.1"/>
</dbReference>
<dbReference type="STRING" id="71421.HI_1510"/>
<dbReference type="EnsemblBacteria" id="AAC23157">
    <property type="protein sequence ID" value="AAC23157"/>
    <property type="gene ID" value="HI_1510"/>
</dbReference>
<dbReference type="KEGG" id="hin:HI_1510"/>
<dbReference type="PATRIC" id="fig|71421.8.peg.1580"/>
<dbReference type="eggNOG" id="ENOG5033C46">
    <property type="taxonomic scope" value="Bacteria"/>
</dbReference>
<dbReference type="HOGENOM" id="CLU_184380_5_0_6"/>
<dbReference type="OrthoDB" id="8689507at2"/>
<dbReference type="BioCyc" id="HINF71421:G1GJ1-1533-MONOMER"/>
<dbReference type="Proteomes" id="UP000000579">
    <property type="component" value="Chromosome"/>
</dbReference>
<dbReference type="InterPro" id="IPR024400">
    <property type="entry name" value="DUF2635"/>
</dbReference>
<dbReference type="Pfam" id="PF10948">
    <property type="entry name" value="DUF2635"/>
    <property type="match status" value="1"/>
</dbReference>
<gene>
    <name type="ordered locus">HI_1510</name>
</gene>
<sequence>MPTFKIKPKTGLLIRDPETFELLSESGEDKPKISYWLNHLKNGDVELVTETTTKAKNSNKEQA</sequence>
<proteinExistence type="predicted"/>
<accession>P44232</accession>
<organism>
    <name type="scientific">Haemophilus influenzae (strain ATCC 51907 / DSM 11121 / KW20 / Rd)</name>
    <dbReference type="NCBI Taxonomy" id="71421"/>
    <lineage>
        <taxon>Bacteria</taxon>
        <taxon>Pseudomonadati</taxon>
        <taxon>Pseudomonadota</taxon>
        <taxon>Gammaproteobacteria</taxon>
        <taxon>Pasteurellales</taxon>
        <taxon>Pasteurellaceae</taxon>
        <taxon>Haemophilus</taxon>
    </lineage>
</organism>
<reference key="1">
    <citation type="journal article" date="1995" name="Science">
        <title>Whole-genome random sequencing and assembly of Haemophilus influenzae Rd.</title>
        <authorList>
            <person name="Fleischmann R.D."/>
            <person name="Adams M.D."/>
            <person name="White O."/>
            <person name="Clayton R.A."/>
            <person name="Kirkness E.F."/>
            <person name="Kerlavage A.R."/>
            <person name="Bult C.J."/>
            <person name="Tomb J.-F."/>
            <person name="Dougherty B.A."/>
            <person name="Merrick J.M."/>
            <person name="McKenney K."/>
            <person name="Sutton G.G."/>
            <person name="FitzHugh W."/>
            <person name="Fields C.A."/>
            <person name="Gocayne J.D."/>
            <person name="Scott J.D."/>
            <person name="Shirley R."/>
            <person name="Liu L.-I."/>
            <person name="Glodek A."/>
            <person name="Kelley J.M."/>
            <person name="Weidman J.F."/>
            <person name="Phillips C.A."/>
            <person name="Spriggs T."/>
            <person name="Hedblom E."/>
            <person name="Cotton M.D."/>
            <person name="Utterback T.R."/>
            <person name="Hanna M.C."/>
            <person name="Nguyen D.T."/>
            <person name="Saudek D.M."/>
            <person name="Brandon R.C."/>
            <person name="Fine L.D."/>
            <person name="Fritchman J.L."/>
            <person name="Fuhrmann J.L."/>
            <person name="Geoghagen N.S.M."/>
            <person name="Gnehm C.L."/>
            <person name="McDonald L.A."/>
            <person name="Small K.V."/>
            <person name="Fraser C.M."/>
            <person name="Smith H.O."/>
            <person name="Venter J.C."/>
        </authorList>
    </citation>
    <scope>NUCLEOTIDE SEQUENCE [LARGE SCALE GENOMIC DNA]</scope>
    <source>
        <strain>ATCC 51907 / DSM 11121 / KW20 / Rd</strain>
    </source>
</reference>
<feature type="chain" id="PRO_0000077833" description="Mu-like prophage FluMu protein gp38">
    <location>
        <begin position="1"/>
        <end position="63"/>
    </location>
</feature>
<name>VG38_HAEIN</name>
<protein>
    <recommendedName>
        <fullName>Mu-like prophage FluMu protein gp38</fullName>
    </recommendedName>
</protein>
<comment type="similarity">
    <text evidence="1">To phage Mu protein gp38.</text>
</comment>
<keyword id="KW-1185">Reference proteome</keyword>
<evidence type="ECO:0000305" key="1"/>